<proteinExistence type="inferred from homology"/>
<organism>
    <name type="scientific">Yersinia pestis</name>
    <dbReference type="NCBI Taxonomy" id="632"/>
    <lineage>
        <taxon>Bacteria</taxon>
        <taxon>Pseudomonadati</taxon>
        <taxon>Pseudomonadota</taxon>
        <taxon>Gammaproteobacteria</taxon>
        <taxon>Enterobacterales</taxon>
        <taxon>Yersiniaceae</taxon>
        <taxon>Yersinia</taxon>
    </lineage>
</organism>
<accession>Q8ZEU2</accession>
<accession>Q0WF95</accession>
<protein>
    <recommendedName>
        <fullName>High-affinity zinc uptake system protein ZnuA</fullName>
    </recommendedName>
</protein>
<sequence length="318" mass="35244">MLHKNKWLKQAMLASALLLANPFNLASAAVVTSIRPLGFIAAAIADGVLPTEVLLPDGASPHDYALRPSDVQRLRSAELVIWVGPEMEAFLSKPLTQVAENKQIALSQLPSVTPLLMKSDEHDEAEEGESGHHHDHAKDNPTDDHHHGEYNMHIWLSPAIAKQAAIAIHDRLLELTPQNKDKLDANLRRFEYQLAQNEKNIVTMLKPVQGKGYFVFHDAYGYFENHFGLSPLGHFTVNPEIQPGAQRLHQIRTQLVEHKAVCVFAEPQFRPAVINAVAKGTNVRSGTLDPLGSGIVLDKDSYVNFLSQLSNQYVSCLK</sequence>
<dbReference type="EMBL" id="AL590842">
    <property type="protein sequence ID" value="CAL20696.1"/>
    <property type="molecule type" value="Genomic_DNA"/>
</dbReference>
<dbReference type="EMBL" id="AE009952">
    <property type="protein sequence ID" value="AAM85809.1"/>
    <property type="molecule type" value="Genomic_DNA"/>
</dbReference>
<dbReference type="EMBL" id="AE017042">
    <property type="protein sequence ID" value="AAS62122.1"/>
    <property type="molecule type" value="Genomic_DNA"/>
</dbReference>
<dbReference type="PIR" id="AE0251">
    <property type="entry name" value="AE0251"/>
</dbReference>
<dbReference type="RefSeq" id="WP_002227944.1">
    <property type="nucleotide sequence ID" value="NZ_WUCM01000062.1"/>
</dbReference>
<dbReference type="RefSeq" id="YP_002347043.1">
    <property type="nucleotide sequence ID" value="NC_003143.1"/>
</dbReference>
<dbReference type="SMR" id="Q8ZEU2"/>
<dbReference type="STRING" id="214092.YPO2061"/>
<dbReference type="PaxDb" id="214092-YPO2061"/>
<dbReference type="DNASU" id="1147196"/>
<dbReference type="EnsemblBacteria" id="AAS62122">
    <property type="protein sequence ID" value="AAS62122"/>
    <property type="gene ID" value="YP_1904"/>
</dbReference>
<dbReference type="GeneID" id="57976600"/>
<dbReference type="KEGG" id="ype:YPO2061"/>
<dbReference type="KEGG" id="ypk:y2249"/>
<dbReference type="KEGG" id="ypm:YP_1904"/>
<dbReference type="PATRIC" id="fig|214092.21.peg.2449"/>
<dbReference type="eggNOG" id="COG4531">
    <property type="taxonomic scope" value="Bacteria"/>
</dbReference>
<dbReference type="HOGENOM" id="CLU_016838_1_2_6"/>
<dbReference type="OMA" id="FHEAFDY"/>
<dbReference type="OrthoDB" id="7346865at2"/>
<dbReference type="PHI-base" id="PHI:11907"/>
<dbReference type="Proteomes" id="UP000000815">
    <property type="component" value="Chromosome"/>
</dbReference>
<dbReference type="Proteomes" id="UP000001019">
    <property type="component" value="Chromosome"/>
</dbReference>
<dbReference type="Proteomes" id="UP000002490">
    <property type="component" value="Chromosome"/>
</dbReference>
<dbReference type="GO" id="GO:0042597">
    <property type="term" value="C:periplasmic space"/>
    <property type="evidence" value="ECO:0007669"/>
    <property type="project" value="UniProtKB-SubCell"/>
</dbReference>
<dbReference type="GO" id="GO:0046872">
    <property type="term" value="F:metal ion binding"/>
    <property type="evidence" value="ECO:0007669"/>
    <property type="project" value="UniProtKB-KW"/>
</dbReference>
<dbReference type="GO" id="GO:0006829">
    <property type="term" value="P:zinc ion transport"/>
    <property type="evidence" value="ECO:0007669"/>
    <property type="project" value="UniProtKB-KW"/>
</dbReference>
<dbReference type="CDD" id="cd01019">
    <property type="entry name" value="ZnuA"/>
    <property type="match status" value="1"/>
</dbReference>
<dbReference type="FunFam" id="3.40.50.1980:FF:000028">
    <property type="entry name" value="High-affinity zinc uptake system protein znuA"/>
    <property type="match status" value="1"/>
</dbReference>
<dbReference type="FunFam" id="3.40.50.1980:FF:000006">
    <property type="entry name" value="Zinc ABC transporter substrate-binding protein ZnuA"/>
    <property type="match status" value="1"/>
</dbReference>
<dbReference type="Gene3D" id="3.40.50.1980">
    <property type="entry name" value="Nitrogenase molybdenum iron protein domain"/>
    <property type="match status" value="2"/>
</dbReference>
<dbReference type="InterPro" id="IPR050492">
    <property type="entry name" value="Bact_metal-bind_prot9"/>
</dbReference>
<dbReference type="InterPro" id="IPR035520">
    <property type="entry name" value="ZnuA"/>
</dbReference>
<dbReference type="InterPro" id="IPR006127">
    <property type="entry name" value="ZnuA-like"/>
</dbReference>
<dbReference type="NCBIfam" id="NF007091">
    <property type="entry name" value="PRK09545.1"/>
    <property type="match status" value="1"/>
</dbReference>
<dbReference type="PANTHER" id="PTHR42953:SF3">
    <property type="entry name" value="HIGH-AFFINITY ZINC UPTAKE SYSTEM PROTEIN ZNUA"/>
    <property type="match status" value="1"/>
</dbReference>
<dbReference type="PANTHER" id="PTHR42953">
    <property type="entry name" value="HIGH-AFFINITY ZINC UPTAKE SYSTEM PROTEIN ZNUA-RELATED"/>
    <property type="match status" value="1"/>
</dbReference>
<dbReference type="Pfam" id="PF01297">
    <property type="entry name" value="ZnuA"/>
    <property type="match status" value="1"/>
</dbReference>
<dbReference type="SUPFAM" id="SSF53807">
    <property type="entry name" value="Helical backbone' metal receptor"/>
    <property type="match status" value="1"/>
</dbReference>
<feature type="signal peptide" evidence="4">
    <location>
        <begin position="1"/>
        <end position="28"/>
    </location>
</feature>
<feature type="chain" id="PRO_0000031878" description="High-affinity zinc uptake system protein ZnuA">
    <location>
        <begin position="29"/>
        <end position="318"/>
    </location>
</feature>
<feature type="region of interest" description="Disordered" evidence="5">
    <location>
        <begin position="121"/>
        <end position="146"/>
    </location>
</feature>
<feature type="compositionally biased region" description="Basic and acidic residues" evidence="5">
    <location>
        <begin position="129"/>
        <end position="146"/>
    </location>
</feature>
<feature type="binding site" evidence="1">
    <location>
        <position position="62"/>
    </location>
    <ligand>
        <name>Zn(2+)</name>
        <dbReference type="ChEBI" id="CHEBI:29105"/>
    </ligand>
</feature>
<feature type="binding site" evidence="1">
    <location>
        <position position="153"/>
    </location>
    <ligand>
        <name>Zn(2+)</name>
        <dbReference type="ChEBI" id="CHEBI:29105"/>
    </ligand>
</feature>
<feature type="binding site" evidence="1">
    <location>
        <position position="217"/>
    </location>
    <ligand>
        <name>Zn(2+)</name>
        <dbReference type="ChEBI" id="CHEBI:29105"/>
    </ligand>
</feature>
<feature type="binding site" evidence="2">
    <location>
        <position position="289"/>
    </location>
    <ligand>
        <name>Zn(2+)</name>
        <dbReference type="ChEBI" id="CHEBI:29105"/>
    </ligand>
</feature>
<feature type="disulfide bond" evidence="1">
    <location>
        <begin position="262"/>
        <end position="316"/>
    </location>
</feature>
<reference key="1">
    <citation type="journal article" date="2001" name="Nature">
        <title>Genome sequence of Yersinia pestis, the causative agent of plague.</title>
        <authorList>
            <person name="Parkhill J."/>
            <person name="Wren B.W."/>
            <person name="Thomson N.R."/>
            <person name="Titball R.W."/>
            <person name="Holden M.T.G."/>
            <person name="Prentice M.B."/>
            <person name="Sebaihia M."/>
            <person name="James K.D."/>
            <person name="Churcher C.M."/>
            <person name="Mungall K.L."/>
            <person name="Baker S."/>
            <person name="Basham D."/>
            <person name="Bentley S.D."/>
            <person name="Brooks K."/>
            <person name="Cerdeno-Tarraga A.-M."/>
            <person name="Chillingworth T."/>
            <person name="Cronin A."/>
            <person name="Davies R.M."/>
            <person name="Davis P."/>
            <person name="Dougan G."/>
            <person name="Feltwell T."/>
            <person name="Hamlin N."/>
            <person name="Holroyd S."/>
            <person name="Jagels K."/>
            <person name="Karlyshev A.V."/>
            <person name="Leather S."/>
            <person name="Moule S."/>
            <person name="Oyston P.C.F."/>
            <person name="Quail M.A."/>
            <person name="Rutherford K.M."/>
            <person name="Simmonds M."/>
            <person name="Skelton J."/>
            <person name="Stevens K."/>
            <person name="Whitehead S."/>
            <person name="Barrell B.G."/>
        </authorList>
    </citation>
    <scope>NUCLEOTIDE SEQUENCE [LARGE SCALE GENOMIC DNA]</scope>
    <source>
        <strain>CO-92 / Biovar Orientalis</strain>
    </source>
</reference>
<reference key="2">
    <citation type="journal article" date="2002" name="J. Bacteriol.">
        <title>Genome sequence of Yersinia pestis KIM.</title>
        <authorList>
            <person name="Deng W."/>
            <person name="Burland V."/>
            <person name="Plunkett G. III"/>
            <person name="Boutin A."/>
            <person name="Mayhew G.F."/>
            <person name="Liss P."/>
            <person name="Perna N.T."/>
            <person name="Rose D.J."/>
            <person name="Mau B."/>
            <person name="Zhou S."/>
            <person name="Schwartz D.C."/>
            <person name="Fetherston J.D."/>
            <person name="Lindler L.E."/>
            <person name="Brubaker R.R."/>
            <person name="Plano G.V."/>
            <person name="Straley S.C."/>
            <person name="McDonough K.A."/>
            <person name="Nilles M.L."/>
            <person name="Matson J.S."/>
            <person name="Blattner F.R."/>
            <person name="Perry R.D."/>
        </authorList>
    </citation>
    <scope>NUCLEOTIDE SEQUENCE [LARGE SCALE GENOMIC DNA]</scope>
    <source>
        <strain>KIM10+ / Biovar Mediaevalis</strain>
    </source>
</reference>
<reference key="3">
    <citation type="journal article" date="2004" name="DNA Res.">
        <title>Complete genome sequence of Yersinia pestis strain 91001, an isolate avirulent to humans.</title>
        <authorList>
            <person name="Song Y."/>
            <person name="Tong Z."/>
            <person name="Wang J."/>
            <person name="Wang L."/>
            <person name="Guo Z."/>
            <person name="Han Y."/>
            <person name="Zhang J."/>
            <person name="Pei D."/>
            <person name="Zhou D."/>
            <person name="Qin H."/>
            <person name="Pang X."/>
            <person name="Han Y."/>
            <person name="Zhai J."/>
            <person name="Li M."/>
            <person name="Cui B."/>
            <person name="Qi Z."/>
            <person name="Jin L."/>
            <person name="Dai R."/>
            <person name="Chen F."/>
            <person name="Li S."/>
            <person name="Ye C."/>
            <person name="Du Z."/>
            <person name="Lin W."/>
            <person name="Wang J."/>
            <person name="Yu J."/>
            <person name="Yang H."/>
            <person name="Wang J."/>
            <person name="Huang P."/>
            <person name="Yang R."/>
        </authorList>
    </citation>
    <scope>NUCLEOTIDE SEQUENCE [LARGE SCALE GENOMIC DNA]</scope>
    <source>
        <strain>91001 / Biovar Mediaevalis</strain>
    </source>
</reference>
<name>ZNUA_YERPE</name>
<evidence type="ECO:0000250" key="1">
    <source>
        <dbReference type="UniProtKB" id="P39172"/>
    </source>
</evidence>
<evidence type="ECO:0000250" key="2">
    <source>
        <dbReference type="UniProtKB" id="P96116"/>
    </source>
</evidence>
<evidence type="ECO:0000250" key="3">
    <source>
        <dbReference type="UniProtKB" id="Q9RPX0"/>
    </source>
</evidence>
<evidence type="ECO:0000255" key="4"/>
<evidence type="ECO:0000256" key="5">
    <source>
        <dbReference type="SAM" id="MobiDB-lite"/>
    </source>
</evidence>
<evidence type="ECO:0000305" key="6"/>
<comment type="function">
    <text evidence="3">Part of the ATP-binding cassette (ABC) transport system ZnuABC involved in zinc import (By similarity). Binds zinc with high affinity and specificity and delivers it to the membrane permease for translocation into the cytoplasm (By similarity).</text>
</comment>
<comment type="subcellular location">
    <subcellularLocation>
        <location evidence="3">Periplasm</location>
    </subcellularLocation>
</comment>
<comment type="similarity">
    <text evidence="6">Belongs to the bacterial solute-binding protein 9 family.</text>
</comment>
<keyword id="KW-1015">Disulfide bond</keyword>
<keyword id="KW-0406">Ion transport</keyword>
<keyword id="KW-0479">Metal-binding</keyword>
<keyword id="KW-0574">Periplasm</keyword>
<keyword id="KW-1185">Reference proteome</keyword>
<keyword id="KW-0732">Signal</keyword>
<keyword id="KW-0813">Transport</keyword>
<keyword id="KW-0862">Zinc</keyword>
<keyword id="KW-0864">Zinc transport</keyword>
<gene>
    <name type="primary">znuA</name>
    <name type="ordered locus">YPO2061</name>
    <name type="ordered locus">y2249</name>
    <name type="ordered locus">YP_1904</name>
</gene>